<comment type="function">
    <text>Glutenins are high-molecular weight seed storage proteins of wheat endosperm. Thought to be responsible for the visco-elastic property of wheat dough.</text>
</comment>
<comment type="subunit">
    <text>Disulfide-bridge linked aggregates.</text>
</comment>
<comment type="miscellaneous">
    <text>Glutenins are coded by several genes on each of the group 1 chromosomes of wheat.</text>
</comment>
<comment type="miscellaneous">
    <text>The mature protein is characterized by a large number of well preserved repeats of the two motifs: GQQPGQ and GQQPGQGQQGYYPTS.</text>
</comment>
<comment type="similarity">
    <text evidence="2">Belongs to the gliadin/glutenin family.</text>
</comment>
<proteinExistence type="inferred from homology"/>
<keyword id="KW-1015">Disulfide bond</keyword>
<keyword id="KW-1185">Reference proteome</keyword>
<keyword id="KW-0677">Repeat</keyword>
<keyword id="KW-0708">Seed storage protein</keyword>
<keyword id="KW-0732">Signal</keyword>
<keyword id="KW-0758">Storage protein</keyword>
<feature type="signal peptide">
    <location>
        <begin position="1"/>
        <end position="21"/>
    </location>
</feature>
<feature type="chain" id="PRO_0000032210" description="Glutenin, high molecular weight subunit DX5">
    <location>
        <begin position="22"/>
        <end position="848"/>
    </location>
</feature>
<feature type="region of interest" description="Disordered" evidence="1">
    <location>
        <begin position="124"/>
        <end position="804"/>
    </location>
</feature>
<feature type="compositionally biased region" description="Low complexity" evidence="1">
    <location>
        <begin position="126"/>
        <end position="137"/>
    </location>
</feature>
<feature type="compositionally biased region" description="Low complexity" evidence="1">
    <location>
        <begin position="145"/>
        <end position="166"/>
    </location>
</feature>
<feature type="compositionally biased region" description="Low complexity" evidence="1">
    <location>
        <begin position="173"/>
        <end position="203"/>
    </location>
</feature>
<feature type="compositionally biased region" description="Low complexity" evidence="1">
    <location>
        <begin position="210"/>
        <end position="240"/>
    </location>
</feature>
<feature type="compositionally biased region" description="Low complexity" evidence="1">
    <location>
        <begin position="263"/>
        <end position="303"/>
    </location>
</feature>
<feature type="compositionally biased region" description="Low complexity" evidence="1">
    <location>
        <begin position="310"/>
        <end position="351"/>
    </location>
</feature>
<feature type="compositionally biased region" description="Low complexity" evidence="1">
    <location>
        <begin position="359"/>
        <end position="411"/>
    </location>
</feature>
<feature type="compositionally biased region" description="Low complexity" evidence="1">
    <location>
        <begin position="419"/>
        <end position="468"/>
    </location>
</feature>
<feature type="compositionally biased region" description="Low complexity" evidence="1">
    <location>
        <begin position="476"/>
        <end position="527"/>
    </location>
</feature>
<feature type="compositionally biased region" description="Low complexity" evidence="1">
    <location>
        <begin position="544"/>
        <end position="659"/>
    </location>
</feature>
<feature type="compositionally biased region" description="Low complexity" evidence="1">
    <location>
        <begin position="670"/>
        <end position="687"/>
    </location>
</feature>
<feature type="compositionally biased region" description="Low complexity" evidence="1">
    <location>
        <begin position="709"/>
        <end position="727"/>
    </location>
</feature>
<feature type="compositionally biased region" description="Low complexity" evidence="1">
    <location>
        <begin position="739"/>
        <end position="795"/>
    </location>
</feature>
<dbReference type="EMBL" id="X12928">
    <property type="protein sequence ID" value="CAA31395.4"/>
    <property type="molecule type" value="Genomic_DNA"/>
</dbReference>
<dbReference type="PIR" id="S02262">
    <property type="entry name" value="S02262"/>
</dbReference>
<dbReference type="STRING" id="4565.P10388"/>
<dbReference type="Allergome" id="2898">
    <property type="allergen name" value="Tri a 26"/>
</dbReference>
<dbReference type="Allergome" id="3504">
    <property type="allergen name" value="Tri a 26.0101"/>
</dbReference>
<dbReference type="Proteomes" id="UP000019116">
    <property type="component" value="Unplaced"/>
</dbReference>
<dbReference type="GO" id="GO:0043036">
    <property type="term" value="C:starch grain"/>
    <property type="evidence" value="ECO:0000315"/>
    <property type="project" value="CAFA"/>
</dbReference>
<dbReference type="GO" id="GO:0048029">
    <property type="term" value="F:monosaccharide binding"/>
    <property type="evidence" value="ECO:0000315"/>
    <property type="project" value="CAFA"/>
</dbReference>
<dbReference type="GO" id="GO:0045735">
    <property type="term" value="F:nutrient reservoir activity"/>
    <property type="evidence" value="ECO:0000315"/>
    <property type="project" value="CAFA"/>
</dbReference>
<dbReference type="GO" id="GO:2001070">
    <property type="term" value="F:starch binding"/>
    <property type="evidence" value="ECO:0000315"/>
    <property type="project" value="CAFA"/>
</dbReference>
<dbReference type="GO" id="GO:0052576">
    <property type="term" value="P:carbohydrate storage"/>
    <property type="evidence" value="ECO:0000315"/>
    <property type="project" value="CAFA"/>
</dbReference>
<dbReference type="DisProt" id="DP00285"/>
<dbReference type="InterPro" id="IPR036312">
    <property type="entry name" value="Bifun_inhib/LTP/seed_sf"/>
</dbReference>
<dbReference type="InterPro" id="IPR001419">
    <property type="entry name" value="Glutenin"/>
</dbReference>
<dbReference type="Pfam" id="PF03157">
    <property type="entry name" value="Glutenin_hmw"/>
    <property type="match status" value="2"/>
</dbReference>
<dbReference type="PRINTS" id="PR00210">
    <property type="entry name" value="GLUTENIN"/>
</dbReference>
<dbReference type="SUPFAM" id="SSF47699">
    <property type="entry name" value="Bifunctional inhibitor/lipid-transfer protein/seed storage 2S albumin"/>
    <property type="match status" value="1"/>
</dbReference>
<accession>P10388</accession>
<name>GLT5_WHEAT</name>
<reference key="1">
    <citation type="journal article" date="1989" name="Nucleic Acids Res.">
        <title>Nucleotide sequences of the two high-molecular-weight glutenin genes from the D-genome of a hexaploid bread wheat, Triticum aestivum L. cv Cheyenne.</title>
        <authorList>
            <person name="Anderson O.D."/>
            <person name="Greene F.C."/>
            <person name="Yip R.E."/>
            <person name="Halford N.G."/>
            <person name="Shewry P.R."/>
            <person name="Malpica-Romero J.M."/>
        </authorList>
    </citation>
    <scope>NUCLEOTIDE SEQUENCE [GENOMIC DNA]</scope>
    <source>
        <strain>cv. Cheyenne</strain>
    </source>
</reference>
<reference key="2">
    <citation type="submission" date="2010-02" db="EMBL/GenBank/DDBJ databases">
        <authorList>
            <person name="Anderson O.D."/>
        </authorList>
    </citation>
    <scope>SEQUENCE REVISION</scope>
</reference>
<evidence type="ECO:0000256" key="1">
    <source>
        <dbReference type="SAM" id="MobiDB-lite"/>
    </source>
</evidence>
<evidence type="ECO:0000305" key="2"/>
<protein>
    <recommendedName>
        <fullName>Glutenin, high molecular weight subunit DX5</fullName>
    </recommendedName>
</protein>
<sequence length="848" mass="90293">MAKRLVLFVAVVVALVALTVAEGEASEQLQCERELQELQERELKACQQVMDQQLRDISPECHPVVVSPVAGQYEQQIVVPPKGGSFYPGETTPPQQLQQRIFWGIPALLKRYYPSVTCPQQVSYYPGQASPQRPGQGQQPGQGQQGYYPTSPQQPGQWQQPEQGQPRYYPTSPQQSGQLQQPAQGQQPGQGQQGQQPGQGQPGYYPTSSQLQPGQLQQPAQGQQGQQPGQAQQGQQPGQGQQPGQGQQGQQPGQGQQPGQGQQGQQLGQGQQGYYPTSLQQSGQGQPGYYPTSLQQLGQGQSGYYPTSPQQPGQGQQPGQLQQPAQGQQPGQGQQGQQPGQGQQGQQPGQGQQPGQGQPGYYPTSPQQSGQGQPGYYPTSSQQPTQSQQPGQGQQGQQVGQGQQAQQPGQGQQPGQGQPGYYPTSPQQSGQGQPGYYLTSPQQSGQGQQPGQLQQSAQGQKGQQPGQGQQPGQGQQGQQPGQGQQGQQPGQGQPGYYPTSPQQSGQGQQPGQWQQPGQGQPGYYPTSPLQPGQGQPGYDPTSPQQPGQGQQPGQLQQPAQGQQGQQLAQGQQGQQPAQVQQGQRPAQGQQGQQPGQGQQGQQLGQGQQGQQPGQGQQGQQPAQGQQGQQPGQGQQGQQPGQGQQGQQPGQGQQPGQGQPWYYPTSPQESGQGQQPGQWQQPGQGQPGYYLTSPLQLGQGQQGYYPTSLQQPGQGQQPGQWQQSGQGQHWYYPTSPQLSGQGQRPGQWLQPGQGQQGYYPTSPQQPGQGQQLGQWLQPGQGQQGYYPTSLQQTGQGQQSGQGQQGYYSSYHVSVEHQAASLKVAKAQQLAAQLPAMCRLEGGDALSASQ</sequence>
<gene>
    <name type="primary">GLU-1D-1D</name>
    <name type="synonym">GLU-D1-1B</name>
</gene>
<organism>
    <name type="scientific">Triticum aestivum</name>
    <name type="common">Wheat</name>
    <dbReference type="NCBI Taxonomy" id="4565"/>
    <lineage>
        <taxon>Eukaryota</taxon>
        <taxon>Viridiplantae</taxon>
        <taxon>Streptophyta</taxon>
        <taxon>Embryophyta</taxon>
        <taxon>Tracheophyta</taxon>
        <taxon>Spermatophyta</taxon>
        <taxon>Magnoliopsida</taxon>
        <taxon>Liliopsida</taxon>
        <taxon>Poales</taxon>
        <taxon>Poaceae</taxon>
        <taxon>BOP clade</taxon>
        <taxon>Pooideae</taxon>
        <taxon>Triticodae</taxon>
        <taxon>Triticeae</taxon>
        <taxon>Triticinae</taxon>
        <taxon>Triticum</taxon>
    </lineage>
</organism>